<gene>
    <name type="primary">PE23</name>
    <name type="ordered locus">MT2390</name>
</gene>
<reference key="1">
    <citation type="journal article" date="2002" name="J. Bacteriol.">
        <title>Whole-genome comparison of Mycobacterium tuberculosis clinical and laboratory strains.</title>
        <authorList>
            <person name="Fleischmann R.D."/>
            <person name="Alland D."/>
            <person name="Eisen J.A."/>
            <person name="Carpenter L."/>
            <person name="White O."/>
            <person name="Peterson J.D."/>
            <person name="DeBoy R.T."/>
            <person name="Dodson R.J."/>
            <person name="Gwinn M.L."/>
            <person name="Haft D.H."/>
            <person name="Hickey E.K."/>
            <person name="Kolonay J.F."/>
            <person name="Nelson W.C."/>
            <person name="Umayam L.A."/>
            <person name="Ermolaeva M.D."/>
            <person name="Salzberg S.L."/>
            <person name="Delcher A."/>
            <person name="Utterback T.R."/>
            <person name="Weidman J.F."/>
            <person name="Khouri H.M."/>
            <person name="Gill J."/>
            <person name="Mikula A."/>
            <person name="Bishai W."/>
            <person name="Jacobs W.R. Jr."/>
            <person name="Venter J.C."/>
            <person name="Fraser C.M."/>
        </authorList>
    </citation>
    <scope>NUCLEOTIDE SEQUENCE [LARGE SCALE GENOMIC DNA]</scope>
    <source>
        <strain>CDC 1551 / Oshkosh</strain>
    </source>
</reference>
<proteinExistence type="inferred from homology"/>
<sequence length="382" mass="36833">MQFLSVIPEQVESAAQDLAGIRSALSASYAAAAGPTTAVVSAAEDEVSTAIASIFGAYGRQCQVLSAQASAFHDEFVNLLKTGATAYRNTEFANAQSNVLNAVNAPARSLLGHPSAAESVQNSAPTLGGGHSTVTAGLAAQAGRAVATVEQQAAAAVAPLPSAGAGLAQVVNGVVTAGQGSAAKLATALQSAAPWLAKSGGEFIVAGQSALTGVALLQPAVVGVVQAGGTFLTAGTSAATGLGLLTLAGVEFSQGVGNLALASGTAATGLGLLGSAGVQLFSPAFLLAVPTALGGVGSLAIAVVQLVQGVQHLSLVVPNVVAGIAALQTAGAQFAQGVNHTMLAAQLGAPGIAVLQTAGGHFAQGIGHLTTAGNAAVTVLIS</sequence>
<evidence type="ECO:0000255" key="1"/>
<evidence type="ECO:0000305" key="2"/>
<keyword id="KW-1003">Cell membrane</keyword>
<keyword id="KW-0472">Membrane</keyword>
<keyword id="KW-1185">Reference proteome</keyword>
<keyword id="KW-0812">Transmembrane</keyword>
<keyword id="KW-1133">Transmembrane helix</keyword>
<comment type="subcellular location">
    <subcellularLocation>
        <location evidence="2">Cell membrane</location>
        <topology evidence="2">Multi-pass membrane protein</topology>
    </subcellularLocation>
</comment>
<comment type="similarity">
    <text evidence="2">Belongs to the mycobacterial PE family.</text>
</comment>
<comment type="sequence caution" evidence="2">
    <conflict type="erroneous initiation">
        <sequence resource="EMBL-CDS" id="AAK46682"/>
    </conflict>
</comment>
<feature type="chain" id="PRO_0000428009" description="Uncharacterized PE family protein PE23">
    <location>
        <begin position="1"/>
        <end position="382"/>
    </location>
</feature>
<feature type="transmembrane region" description="Helical" evidence="1">
    <location>
        <begin position="23"/>
        <end position="43"/>
    </location>
</feature>
<feature type="transmembrane region" description="Helical" evidence="1">
    <location>
        <begin position="155"/>
        <end position="175"/>
    </location>
</feature>
<feature type="transmembrane region" description="Helical" evidence="1">
    <location>
        <begin position="203"/>
        <end position="223"/>
    </location>
</feature>
<feature type="transmembrane region" description="Helical" evidence="1">
    <location>
        <begin position="230"/>
        <end position="250"/>
    </location>
</feature>
<feature type="transmembrane region" description="Helical" evidence="1">
    <location>
        <begin position="261"/>
        <end position="281"/>
    </location>
</feature>
<feature type="transmembrane region" description="Helical" evidence="1">
    <location>
        <begin position="284"/>
        <end position="304"/>
    </location>
</feature>
<feature type="transmembrane region" description="Helical" evidence="1">
    <location>
        <begin position="315"/>
        <end position="335"/>
    </location>
</feature>
<feature type="transmembrane region" description="Helical" evidence="1">
    <location>
        <begin position="347"/>
        <end position="367"/>
    </location>
</feature>
<feature type="domain" description="PE" evidence="1">
    <location>
        <begin position="1"/>
        <end position="92"/>
    </location>
</feature>
<protein>
    <recommendedName>
        <fullName>Uncharacterized PE family protein PE23</fullName>
    </recommendedName>
</protein>
<dbReference type="EMBL" id="AE000516">
    <property type="protein sequence ID" value="AAK46682.1"/>
    <property type="status" value="ALT_INIT"/>
    <property type="molecule type" value="Genomic_DNA"/>
</dbReference>
<dbReference type="PIR" id="A70705">
    <property type="entry name" value="A70705"/>
</dbReference>
<dbReference type="RefSeq" id="WP_003411972.1">
    <property type="nucleotide sequence ID" value="NZ_KK341227.1"/>
</dbReference>
<dbReference type="SMR" id="P9WIG8"/>
<dbReference type="KEGG" id="mtc:MT2390"/>
<dbReference type="PATRIC" id="fig|83331.31.peg.2576"/>
<dbReference type="HOGENOM" id="CLU_061151_0_0_11"/>
<dbReference type="Proteomes" id="UP000001020">
    <property type="component" value="Chromosome"/>
</dbReference>
<dbReference type="GO" id="GO:0005886">
    <property type="term" value="C:plasma membrane"/>
    <property type="evidence" value="ECO:0007669"/>
    <property type="project" value="UniProtKB-SubCell"/>
</dbReference>
<dbReference type="Gene3D" id="1.10.287.850">
    <property type="entry name" value="HP0062-like domain"/>
    <property type="match status" value="1"/>
</dbReference>
<dbReference type="InterPro" id="IPR000084">
    <property type="entry name" value="PE-PGRS_N"/>
</dbReference>
<dbReference type="Pfam" id="PF00934">
    <property type="entry name" value="PE"/>
    <property type="match status" value="1"/>
</dbReference>
<dbReference type="SUPFAM" id="SSF140459">
    <property type="entry name" value="PE/PPE dimer-like"/>
    <property type="match status" value="1"/>
</dbReference>
<organism>
    <name type="scientific">Mycobacterium tuberculosis (strain CDC 1551 / Oshkosh)</name>
    <dbReference type="NCBI Taxonomy" id="83331"/>
    <lineage>
        <taxon>Bacteria</taxon>
        <taxon>Bacillati</taxon>
        <taxon>Actinomycetota</taxon>
        <taxon>Actinomycetes</taxon>
        <taxon>Mycobacteriales</taxon>
        <taxon>Mycobacteriaceae</taxon>
        <taxon>Mycobacterium</taxon>
        <taxon>Mycobacterium tuberculosis complex</taxon>
    </lineage>
</organism>
<accession>P9WIG8</accession>
<accession>L0T9H7</accession>
<accession>P0A684</accession>
<accession>P71884</accession>
<name>PE23_MYCTO</name>